<evidence type="ECO:0000255" key="1">
    <source>
        <dbReference type="HAMAP-Rule" id="MF_00523"/>
    </source>
</evidence>
<feature type="chain" id="PRO_0000264375" description="UDP-3-O-acylglucosamine N-acyltransferase 2">
    <location>
        <begin position="1"/>
        <end position="337"/>
    </location>
</feature>
<feature type="active site" description="Proton acceptor" evidence="1">
    <location>
        <position position="238"/>
    </location>
</feature>
<keyword id="KW-0012">Acyltransferase</keyword>
<keyword id="KW-0441">Lipid A biosynthesis</keyword>
<keyword id="KW-0444">Lipid biosynthesis</keyword>
<keyword id="KW-0443">Lipid metabolism</keyword>
<keyword id="KW-0677">Repeat</keyword>
<keyword id="KW-0808">Transferase</keyword>
<gene>
    <name evidence="1" type="primary">lpxD2</name>
    <name type="synonym">lpxD1</name>
    <name type="ordered locus">FTF1571c</name>
</gene>
<organism>
    <name type="scientific">Francisella tularensis subsp. tularensis (strain FSC 198)</name>
    <dbReference type="NCBI Taxonomy" id="393115"/>
    <lineage>
        <taxon>Bacteria</taxon>
        <taxon>Pseudomonadati</taxon>
        <taxon>Pseudomonadota</taxon>
        <taxon>Gammaproteobacteria</taxon>
        <taxon>Thiotrichales</taxon>
        <taxon>Francisellaceae</taxon>
        <taxon>Francisella</taxon>
    </lineage>
</organism>
<comment type="function">
    <text evidence="1">Catalyzes the N-acylation of UDP-3-O-acylglucosamine using 3-hydroxyacyl-ACP as the acyl donor. Is involved in the biosynthesis of lipid A, a phosphorylated glycolipid that anchors the lipopolysaccharide to the outer membrane of the cell.</text>
</comment>
<comment type="catalytic activity">
    <reaction evidence="1">
        <text>a UDP-3-O-[(3R)-3-hydroxyacyl]-alpha-D-glucosamine + a (3R)-hydroxyacyl-[ACP] = a UDP-2-N,3-O-bis[(3R)-3-hydroxyacyl]-alpha-D-glucosamine + holo-[ACP] + H(+)</text>
        <dbReference type="Rhea" id="RHEA:53836"/>
        <dbReference type="Rhea" id="RHEA-COMP:9685"/>
        <dbReference type="Rhea" id="RHEA-COMP:9945"/>
        <dbReference type="ChEBI" id="CHEBI:15378"/>
        <dbReference type="ChEBI" id="CHEBI:64479"/>
        <dbReference type="ChEBI" id="CHEBI:78827"/>
        <dbReference type="ChEBI" id="CHEBI:137740"/>
        <dbReference type="ChEBI" id="CHEBI:137748"/>
        <dbReference type="EC" id="2.3.1.191"/>
    </reaction>
</comment>
<comment type="pathway">
    <text evidence="1">Bacterial outer membrane biogenesis; LPS lipid A biosynthesis.</text>
</comment>
<comment type="subunit">
    <text evidence="1">Homotrimer.</text>
</comment>
<comment type="similarity">
    <text evidence="1">Belongs to the transferase hexapeptide repeat family. LpxD subfamily.</text>
</comment>
<name>LPXD2_FRAT1</name>
<accession>Q14G52</accession>
<protein>
    <recommendedName>
        <fullName evidence="1">UDP-3-O-acylglucosamine N-acyltransferase 2</fullName>
        <ecNumber evidence="1">2.3.1.191</ecNumber>
    </recommendedName>
</protein>
<dbReference type="EC" id="2.3.1.191" evidence="1"/>
<dbReference type="EMBL" id="AM286280">
    <property type="protein sequence ID" value="CAL09587.1"/>
    <property type="molecule type" value="Genomic_DNA"/>
</dbReference>
<dbReference type="SMR" id="Q14G52"/>
<dbReference type="KEGG" id="ftf:FTF1571c"/>
<dbReference type="HOGENOM" id="CLU_049865_0_1_6"/>
<dbReference type="UniPathway" id="UPA00973"/>
<dbReference type="GO" id="GO:0016020">
    <property type="term" value="C:membrane"/>
    <property type="evidence" value="ECO:0007669"/>
    <property type="project" value="GOC"/>
</dbReference>
<dbReference type="GO" id="GO:0016410">
    <property type="term" value="F:N-acyltransferase activity"/>
    <property type="evidence" value="ECO:0007669"/>
    <property type="project" value="InterPro"/>
</dbReference>
<dbReference type="GO" id="GO:0009245">
    <property type="term" value="P:lipid A biosynthetic process"/>
    <property type="evidence" value="ECO:0007669"/>
    <property type="project" value="UniProtKB-UniRule"/>
</dbReference>
<dbReference type="CDD" id="cd03352">
    <property type="entry name" value="LbH_LpxD"/>
    <property type="match status" value="1"/>
</dbReference>
<dbReference type="Gene3D" id="2.160.10.10">
    <property type="entry name" value="Hexapeptide repeat proteins"/>
    <property type="match status" value="1"/>
</dbReference>
<dbReference type="Gene3D" id="3.40.1390.10">
    <property type="entry name" value="MurE/MurF, N-terminal domain"/>
    <property type="match status" value="1"/>
</dbReference>
<dbReference type="HAMAP" id="MF_00523">
    <property type="entry name" value="LpxD"/>
    <property type="match status" value="1"/>
</dbReference>
<dbReference type="InterPro" id="IPR001451">
    <property type="entry name" value="Hexapep"/>
</dbReference>
<dbReference type="InterPro" id="IPR018357">
    <property type="entry name" value="Hexapep_transf_CS"/>
</dbReference>
<dbReference type="InterPro" id="IPR007691">
    <property type="entry name" value="LpxD"/>
</dbReference>
<dbReference type="InterPro" id="IPR011004">
    <property type="entry name" value="Trimer_LpxA-like_sf"/>
</dbReference>
<dbReference type="InterPro" id="IPR020573">
    <property type="entry name" value="UDP_GlcNAc_AcTrfase_non-rep"/>
</dbReference>
<dbReference type="NCBIfam" id="TIGR01853">
    <property type="entry name" value="lipid_A_lpxD"/>
    <property type="match status" value="1"/>
</dbReference>
<dbReference type="NCBIfam" id="NF002060">
    <property type="entry name" value="PRK00892.1"/>
    <property type="match status" value="1"/>
</dbReference>
<dbReference type="PANTHER" id="PTHR43378">
    <property type="entry name" value="UDP-3-O-ACYLGLUCOSAMINE N-ACYLTRANSFERASE"/>
    <property type="match status" value="1"/>
</dbReference>
<dbReference type="PANTHER" id="PTHR43378:SF2">
    <property type="entry name" value="UDP-3-O-ACYLGLUCOSAMINE N-ACYLTRANSFERASE 1, MITOCHONDRIAL-RELATED"/>
    <property type="match status" value="1"/>
</dbReference>
<dbReference type="Pfam" id="PF00132">
    <property type="entry name" value="Hexapep"/>
    <property type="match status" value="2"/>
</dbReference>
<dbReference type="Pfam" id="PF14602">
    <property type="entry name" value="Hexapep_2"/>
    <property type="match status" value="1"/>
</dbReference>
<dbReference type="Pfam" id="PF04613">
    <property type="entry name" value="LpxD"/>
    <property type="match status" value="1"/>
</dbReference>
<dbReference type="SUPFAM" id="SSF51161">
    <property type="entry name" value="Trimeric LpxA-like enzymes"/>
    <property type="match status" value="1"/>
</dbReference>
<dbReference type="PROSITE" id="PS00101">
    <property type="entry name" value="HEXAPEP_TRANSFERASES"/>
    <property type="match status" value="2"/>
</dbReference>
<sequence length="337" mass="35443">MYSLDFLASKLDGEVKGDKNVEIKKIATLSQAGEGDISFCTNPKYLKALSETKASAVLITEEVLEFCNTNAVVLSNPYMALAKVMELFDKSPRPDGKIHSKAVIAASAIIGENVTIGANAVVGENVVIGDNVYIGACATIDNGTKIGNDTLIKSNVSIAHDVVIGTGCIIHQNAVIGCDGFGNARDEDGSWTKIPQLGRVIIEDDVEIGSGTTVDRGAIDDTIIKKGARIDNLVQIAHNVVIGRNTALAGVTAVAGSTTIGDNCLIGGQSAITGHISICDNTIIGGASNIGKSITKPGMYYAAFEAKPRIQWGRFVAKLAKIDTLITKVKQLEEKIK</sequence>
<reference key="1">
    <citation type="journal article" date="2007" name="PLoS ONE">
        <title>Genome sequencing shows that European isolates of Francisella tularensis subspecies tularensis are almost identical to US laboratory strain Schu S4.</title>
        <authorList>
            <person name="Chaudhuri R.R."/>
            <person name="Ren C.-P."/>
            <person name="Desmond L."/>
            <person name="Vincent G.A."/>
            <person name="Silman N.J."/>
            <person name="Brehm J.K."/>
            <person name="Elmore M.J."/>
            <person name="Hudson M.J."/>
            <person name="Forsman M."/>
            <person name="Isherwood K.E."/>
            <person name="Gurycova D."/>
            <person name="Minton N.P."/>
            <person name="Titball R.W."/>
            <person name="Pallen M.J."/>
            <person name="Vipond R."/>
        </authorList>
    </citation>
    <scope>NUCLEOTIDE SEQUENCE [LARGE SCALE GENOMIC DNA]</scope>
    <source>
        <strain>FSC 198</strain>
    </source>
</reference>
<proteinExistence type="inferred from homology"/>